<reference key="1">
    <citation type="journal article" date="1993" name="Curr. Genet.">
        <title>Structure, expression, and phylogenetic relationships of a family of ypt genes encoding small G-proteins in the green alga Volvox carteri.</title>
        <authorList>
            <person name="Fabry S."/>
            <person name="Jacobsen A."/>
            <person name="Huber H."/>
            <person name="Palme K."/>
            <person name="Schmitt R."/>
        </authorList>
    </citation>
    <scope>NUCLEOTIDE SEQUENCE [GENOMIC DNA]</scope>
    <source>
        <strain>f. Nagariensis / HK10</strain>
    </source>
</reference>
<gene>
    <name type="primary">YPTV2</name>
</gene>
<dbReference type="EMBL" id="L08128">
    <property type="protein sequence ID" value="AAA34251.1"/>
    <property type="molecule type" value="Genomic_DNA"/>
</dbReference>
<dbReference type="PIR" id="S36365">
    <property type="entry name" value="S36365"/>
</dbReference>
<dbReference type="SMR" id="P36861"/>
<dbReference type="KEGG" id="vcn:VOLCADRAFT_83299"/>
<dbReference type="OMA" id="ENIRTWF"/>
<dbReference type="GO" id="GO:0005886">
    <property type="term" value="C:plasma membrane"/>
    <property type="evidence" value="ECO:0007669"/>
    <property type="project" value="UniProtKB-SubCell"/>
</dbReference>
<dbReference type="GO" id="GO:0005525">
    <property type="term" value="F:GTP binding"/>
    <property type="evidence" value="ECO:0007669"/>
    <property type="project" value="UniProtKB-KW"/>
</dbReference>
<dbReference type="GO" id="GO:0003924">
    <property type="term" value="F:GTPase activity"/>
    <property type="evidence" value="ECO:0007669"/>
    <property type="project" value="InterPro"/>
</dbReference>
<dbReference type="GO" id="GO:0015031">
    <property type="term" value="P:protein transport"/>
    <property type="evidence" value="ECO:0007669"/>
    <property type="project" value="UniProtKB-KW"/>
</dbReference>
<dbReference type="CDD" id="cd01867">
    <property type="entry name" value="Rab8_Rab10_Rab13_like"/>
    <property type="match status" value="1"/>
</dbReference>
<dbReference type="FunFam" id="3.40.50.300:FF:000308">
    <property type="entry name" value="ras-related protein RABE1c-like"/>
    <property type="match status" value="1"/>
</dbReference>
<dbReference type="Gene3D" id="3.40.50.300">
    <property type="entry name" value="P-loop containing nucleotide triphosphate hydrolases"/>
    <property type="match status" value="1"/>
</dbReference>
<dbReference type="InterPro" id="IPR027417">
    <property type="entry name" value="P-loop_NTPase"/>
</dbReference>
<dbReference type="InterPro" id="IPR025662">
    <property type="entry name" value="Sigma_54_int_dom_ATP-bd_1"/>
</dbReference>
<dbReference type="InterPro" id="IPR005225">
    <property type="entry name" value="Small_GTP-bd"/>
</dbReference>
<dbReference type="InterPro" id="IPR001806">
    <property type="entry name" value="Small_GTPase"/>
</dbReference>
<dbReference type="InterPro" id="IPR050305">
    <property type="entry name" value="Small_GTPase_Rab"/>
</dbReference>
<dbReference type="NCBIfam" id="TIGR00231">
    <property type="entry name" value="small_GTP"/>
    <property type="match status" value="1"/>
</dbReference>
<dbReference type="PANTHER" id="PTHR47980">
    <property type="entry name" value="LD44762P"/>
    <property type="match status" value="1"/>
</dbReference>
<dbReference type="Pfam" id="PF00071">
    <property type="entry name" value="Ras"/>
    <property type="match status" value="1"/>
</dbReference>
<dbReference type="PRINTS" id="PR00449">
    <property type="entry name" value="RASTRNSFRMNG"/>
</dbReference>
<dbReference type="SMART" id="SM00177">
    <property type="entry name" value="ARF"/>
    <property type="match status" value="1"/>
</dbReference>
<dbReference type="SMART" id="SM00175">
    <property type="entry name" value="RAB"/>
    <property type="match status" value="1"/>
</dbReference>
<dbReference type="SMART" id="SM00176">
    <property type="entry name" value="RAN"/>
    <property type="match status" value="1"/>
</dbReference>
<dbReference type="SMART" id="SM00173">
    <property type="entry name" value="RAS"/>
    <property type="match status" value="1"/>
</dbReference>
<dbReference type="SMART" id="SM00174">
    <property type="entry name" value="RHO"/>
    <property type="match status" value="1"/>
</dbReference>
<dbReference type="SUPFAM" id="SSF52540">
    <property type="entry name" value="P-loop containing nucleoside triphosphate hydrolases"/>
    <property type="match status" value="1"/>
</dbReference>
<dbReference type="PROSITE" id="PS51419">
    <property type="entry name" value="RAB"/>
    <property type="match status" value="1"/>
</dbReference>
<accession>P36861</accession>
<name>YPTV2_VOLCA</name>
<protein>
    <recommendedName>
        <fullName>GTP-binding protein yptV2</fullName>
    </recommendedName>
</protein>
<feature type="chain" id="PRO_0000121301" description="GTP-binding protein yptV2">
    <location>
        <begin position="1"/>
        <end position="217"/>
    </location>
</feature>
<feature type="region of interest" description="Disordered" evidence="2">
    <location>
        <begin position="198"/>
        <end position="217"/>
    </location>
</feature>
<feature type="short sequence motif" description="Effector region" evidence="3">
    <location>
        <begin position="42"/>
        <end position="50"/>
    </location>
</feature>
<feature type="compositionally biased region" description="Polar residues" evidence="2">
    <location>
        <begin position="201"/>
        <end position="211"/>
    </location>
</feature>
<feature type="binding site" evidence="1">
    <location>
        <begin position="20"/>
        <end position="27"/>
    </location>
    <ligand>
        <name>GTP</name>
        <dbReference type="ChEBI" id="CHEBI:37565"/>
    </ligand>
</feature>
<feature type="binding site" evidence="1">
    <location>
        <begin position="68"/>
        <end position="72"/>
    </location>
    <ligand>
        <name>GTP</name>
        <dbReference type="ChEBI" id="CHEBI:37565"/>
    </ligand>
</feature>
<feature type="binding site" evidence="1">
    <location>
        <begin position="126"/>
        <end position="129"/>
    </location>
    <ligand>
        <name>GTP</name>
        <dbReference type="ChEBI" id="CHEBI:37565"/>
    </ligand>
</feature>
<feature type="lipid moiety-binding region" description="S-geranylgeranyl cysteine" evidence="1">
    <location>
        <position position="215"/>
    </location>
</feature>
<feature type="lipid moiety-binding region" description="S-geranylgeranyl cysteine" evidence="1">
    <location>
        <position position="216"/>
    </location>
</feature>
<sequence>MARIPGRPDYDALIKLLLVGDSGVGKSCLLLRFTDDMFTSSFITTIGIDFKIKKVDVDGKLVKLQIWDTAGQERFRTITSAYYRGAQGIILVYDITDEASFNNVRNWMRNIEQHASDNVNKILVGNKLDLAEDKRVVSIARGQALADEFGFRFYETSAKDNVHVEEAFIAVAKDVLARMEGEHANQQLLQQQQLSAAQPVRLTSGSPSPAQGKSCCR</sequence>
<organism>
    <name type="scientific">Volvox carteri</name>
    <name type="common">Green alga</name>
    <dbReference type="NCBI Taxonomy" id="3067"/>
    <lineage>
        <taxon>Eukaryota</taxon>
        <taxon>Viridiplantae</taxon>
        <taxon>Chlorophyta</taxon>
        <taxon>core chlorophytes</taxon>
        <taxon>Chlorophyceae</taxon>
        <taxon>CS clade</taxon>
        <taxon>Chlamydomonadales</taxon>
        <taxon>Volvocaceae</taxon>
        <taxon>Volvox</taxon>
    </lineage>
</organism>
<evidence type="ECO:0000250" key="1"/>
<evidence type="ECO:0000256" key="2">
    <source>
        <dbReference type="SAM" id="MobiDB-lite"/>
    </source>
</evidence>
<evidence type="ECO:0000305" key="3"/>
<keyword id="KW-1003">Cell membrane</keyword>
<keyword id="KW-0342">GTP-binding</keyword>
<keyword id="KW-0449">Lipoprotein</keyword>
<keyword id="KW-0472">Membrane</keyword>
<keyword id="KW-0547">Nucleotide-binding</keyword>
<keyword id="KW-0636">Prenylation</keyword>
<keyword id="KW-0653">Protein transport</keyword>
<keyword id="KW-0813">Transport</keyword>
<proteinExistence type="inferred from homology"/>
<comment type="function">
    <text evidence="1">Protein transport. Probably involved in vesicular traffic (By similarity).</text>
</comment>
<comment type="subcellular location">
    <subcellularLocation>
        <location evidence="3">Cell membrane</location>
        <topology evidence="3">Lipid-anchor</topology>
        <orientation evidence="3">Cytoplasmic side</orientation>
    </subcellularLocation>
</comment>
<comment type="similarity">
    <text evidence="3">Belongs to the small GTPase superfamily. Rab family.</text>
</comment>